<organism>
    <name type="scientific">Vibrio vulnificus (strain CMCP6)</name>
    <dbReference type="NCBI Taxonomy" id="216895"/>
    <lineage>
        <taxon>Bacteria</taxon>
        <taxon>Pseudomonadati</taxon>
        <taxon>Pseudomonadota</taxon>
        <taxon>Gammaproteobacteria</taxon>
        <taxon>Vibrionales</taxon>
        <taxon>Vibrionaceae</taxon>
        <taxon>Vibrio</taxon>
    </lineage>
</organism>
<accession>Q8DAP0</accession>
<dbReference type="EC" id="2.5.1.-" evidence="1"/>
<dbReference type="EMBL" id="AE016795">
    <property type="protein sequence ID" value="AAO10538.1"/>
    <property type="molecule type" value="Genomic_DNA"/>
</dbReference>
<dbReference type="RefSeq" id="WP_011080032.1">
    <property type="nucleotide sequence ID" value="NC_004459.3"/>
</dbReference>
<dbReference type="PDB" id="7CT8">
    <property type="method" value="X-ray"/>
    <property type="resolution" value="2.10 A"/>
    <property type="chains" value="A/B=1-323"/>
</dbReference>
<dbReference type="PDB" id="7CT9">
    <property type="method" value="X-ray"/>
    <property type="resolution" value="2.30 A"/>
    <property type="chains" value="A/B=1-323"/>
</dbReference>
<dbReference type="PDB" id="7CTA">
    <property type="method" value="X-ray"/>
    <property type="resolution" value="2.90 A"/>
    <property type="chains" value="A/B=1-323"/>
</dbReference>
<dbReference type="PDBsum" id="7CT8"/>
<dbReference type="PDBsum" id="7CT9"/>
<dbReference type="PDBsum" id="7CTA"/>
<dbReference type="SMR" id="Q8DAP0"/>
<dbReference type="GeneID" id="93896344"/>
<dbReference type="KEGG" id="vvu:VV1_2153"/>
<dbReference type="HOGENOM" id="CLU_052665_0_0_6"/>
<dbReference type="Proteomes" id="UP000002275">
    <property type="component" value="Chromosome 1"/>
</dbReference>
<dbReference type="GO" id="GO:0008168">
    <property type="term" value="F:methyltransferase activity"/>
    <property type="evidence" value="ECO:0007669"/>
    <property type="project" value="TreeGrafter"/>
</dbReference>
<dbReference type="GO" id="GO:0016765">
    <property type="term" value="F:transferase activity, transferring alkyl or aryl (other than methyl) groups"/>
    <property type="evidence" value="ECO:0007669"/>
    <property type="project" value="UniProtKB-UniRule"/>
</dbReference>
<dbReference type="GO" id="GO:0002098">
    <property type="term" value="P:tRNA wobble uridine modification"/>
    <property type="evidence" value="ECO:0007669"/>
    <property type="project" value="InterPro"/>
</dbReference>
<dbReference type="CDD" id="cd02440">
    <property type="entry name" value="AdoMet_MTases"/>
    <property type="match status" value="1"/>
</dbReference>
<dbReference type="Gene3D" id="3.40.50.150">
    <property type="entry name" value="Vaccinia Virus protein VP39"/>
    <property type="match status" value="1"/>
</dbReference>
<dbReference type="HAMAP" id="MF_01590">
    <property type="entry name" value="tRNA_carboxymethyltr_CmoB"/>
    <property type="match status" value="1"/>
</dbReference>
<dbReference type="InterPro" id="IPR010017">
    <property type="entry name" value="CmoB"/>
</dbReference>
<dbReference type="InterPro" id="IPR027555">
    <property type="entry name" value="Mo5U34_MeTrfas-like"/>
</dbReference>
<dbReference type="InterPro" id="IPR029063">
    <property type="entry name" value="SAM-dependent_MTases_sf"/>
</dbReference>
<dbReference type="NCBIfam" id="NF011650">
    <property type="entry name" value="PRK15068.1"/>
    <property type="match status" value="1"/>
</dbReference>
<dbReference type="NCBIfam" id="TIGR00452">
    <property type="entry name" value="tRNA 5-methoxyuridine(34)/uridine 5-oxyacetic acid(34) synthase CmoB"/>
    <property type="match status" value="1"/>
</dbReference>
<dbReference type="PANTHER" id="PTHR43464">
    <property type="entry name" value="METHYLTRANSFERASE"/>
    <property type="match status" value="1"/>
</dbReference>
<dbReference type="PANTHER" id="PTHR43464:SF95">
    <property type="entry name" value="TRNA U34 CARBOXYMETHYLTRANSFERASE"/>
    <property type="match status" value="1"/>
</dbReference>
<dbReference type="Pfam" id="PF08003">
    <property type="entry name" value="Methyltransf_9"/>
    <property type="match status" value="1"/>
</dbReference>
<dbReference type="SUPFAM" id="SSF53335">
    <property type="entry name" value="S-adenosyl-L-methionine-dependent methyltransferases"/>
    <property type="match status" value="1"/>
</dbReference>
<feature type="chain" id="PRO_0000313989" description="tRNA U34 carboxymethyltransferase">
    <location>
        <begin position="1"/>
        <end position="323"/>
    </location>
</feature>
<feature type="binding site" evidence="1">
    <location>
        <position position="91"/>
    </location>
    <ligand>
        <name>carboxy-S-adenosyl-L-methionine</name>
        <dbReference type="ChEBI" id="CHEBI:134278"/>
    </ligand>
</feature>
<feature type="binding site" evidence="1">
    <location>
        <position position="105"/>
    </location>
    <ligand>
        <name>carboxy-S-adenosyl-L-methionine</name>
        <dbReference type="ChEBI" id="CHEBI:134278"/>
    </ligand>
</feature>
<feature type="binding site" evidence="1">
    <location>
        <position position="110"/>
    </location>
    <ligand>
        <name>carboxy-S-adenosyl-L-methionine</name>
        <dbReference type="ChEBI" id="CHEBI:134278"/>
    </ligand>
</feature>
<feature type="binding site" evidence="1">
    <location>
        <position position="130"/>
    </location>
    <ligand>
        <name>carboxy-S-adenosyl-L-methionine</name>
        <dbReference type="ChEBI" id="CHEBI:134278"/>
    </ligand>
</feature>
<feature type="binding site" evidence="1">
    <location>
        <begin position="152"/>
        <end position="154"/>
    </location>
    <ligand>
        <name>carboxy-S-adenosyl-L-methionine</name>
        <dbReference type="ChEBI" id="CHEBI:134278"/>
    </ligand>
</feature>
<feature type="binding site" evidence="1">
    <location>
        <begin position="181"/>
        <end position="182"/>
    </location>
    <ligand>
        <name>carboxy-S-adenosyl-L-methionine</name>
        <dbReference type="ChEBI" id="CHEBI:134278"/>
    </ligand>
</feature>
<feature type="binding site" evidence="1">
    <location>
        <position position="196"/>
    </location>
    <ligand>
        <name>carboxy-S-adenosyl-L-methionine</name>
        <dbReference type="ChEBI" id="CHEBI:134278"/>
    </ligand>
</feature>
<feature type="binding site" evidence="1">
    <location>
        <position position="200"/>
    </location>
    <ligand>
        <name>carboxy-S-adenosyl-L-methionine</name>
        <dbReference type="ChEBI" id="CHEBI:134278"/>
    </ligand>
</feature>
<feature type="binding site" evidence="1">
    <location>
        <position position="315"/>
    </location>
    <ligand>
        <name>carboxy-S-adenosyl-L-methionine</name>
        <dbReference type="ChEBI" id="CHEBI:134278"/>
    </ligand>
</feature>
<feature type="helix" evidence="2">
    <location>
        <begin position="5"/>
        <end position="12"/>
    </location>
</feature>
<feature type="turn" evidence="2">
    <location>
        <begin position="15"/>
        <end position="17"/>
    </location>
</feature>
<feature type="helix" evidence="2">
    <location>
        <begin position="18"/>
        <end position="22"/>
    </location>
</feature>
<feature type="helix" evidence="2">
    <location>
        <begin position="24"/>
        <end position="33"/>
    </location>
</feature>
<feature type="helix" evidence="2">
    <location>
        <begin position="39"/>
        <end position="48"/>
    </location>
</feature>
<feature type="strand" evidence="2">
    <location>
        <begin position="55"/>
        <end position="58"/>
    </location>
</feature>
<feature type="strand" evidence="2">
    <location>
        <begin position="60"/>
        <end position="62"/>
    </location>
</feature>
<feature type="strand" evidence="2">
    <location>
        <begin position="64"/>
        <end position="66"/>
    </location>
</feature>
<feature type="helix" evidence="2">
    <location>
        <begin position="73"/>
        <end position="84"/>
    </location>
</feature>
<feature type="strand" evidence="2">
    <location>
        <begin position="94"/>
        <end position="96"/>
    </location>
</feature>
<feature type="strand" evidence="2">
    <location>
        <begin position="99"/>
        <end position="101"/>
    </location>
</feature>
<feature type="strand" evidence="3">
    <location>
        <begin position="104"/>
        <end position="106"/>
    </location>
</feature>
<feature type="helix" evidence="2">
    <location>
        <begin position="107"/>
        <end position="114"/>
    </location>
</feature>
<feature type="helix" evidence="2">
    <location>
        <begin position="115"/>
        <end position="117"/>
    </location>
</feature>
<feature type="strand" evidence="2">
    <location>
        <begin position="125"/>
        <end position="129"/>
    </location>
</feature>
<feature type="helix" evidence="2">
    <location>
        <begin position="135"/>
        <end position="142"/>
    </location>
</feature>
<feature type="strand" evidence="2">
    <location>
        <begin position="146"/>
        <end position="151"/>
    </location>
</feature>
<feature type="helix" evidence="2">
    <location>
        <begin position="155"/>
        <end position="167"/>
    </location>
</feature>
<feature type="strand" evidence="2">
    <location>
        <begin position="172"/>
        <end position="177"/>
    </location>
</feature>
<feature type="helix" evidence="2">
    <location>
        <begin position="181"/>
        <end position="183"/>
    </location>
</feature>
<feature type="strand" evidence="2">
    <location>
        <begin position="190"/>
        <end position="197"/>
    </location>
</feature>
<feature type="helix" evidence="2">
    <location>
        <begin position="199"/>
        <end position="201"/>
    </location>
</feature>
<feature type="helix" evidence="2">
    <location>
        <begin position="205"/>
        <end position="213"/>
    </location>
</feature>
<feature type="strand" evidence="2">
    <location>
        <begin position="216"/>
        <end position="230"/>
    </location>
</feature>
<feature type="strand" evidence="2">
    <location>
        <begin position="235"/>
        <end position="237"/>
    </location>
</feature>
<feature type="strand" evidence="2">
    <location>
        <begin position="246"/>
        <end position="248"/>
    </location>
</feature>
<feature type="strand" evidence="2">
    <location>
        <begin position="252"/>
        <end position="254"/>
    </location>
</feature>
<feature type="helix" evidence="2">
    <location>
        <begin position="255"/>
        <end position="264"/>
    </location>
</feature>
<feature type="strand" evidence="2">
    <location>
        <begin position="268"/>
        <end position="277"/>
    </location>
</feature>
<feature type="helix" evidence="2">
    <location>
        <begin position="278"/>
        <end position="281"/>
    </location>
</feature>
<feature type="helix" evidence="3">
    <location>
        <begin position="294"/>
        <end position="297"/>
    </location>
</feature>
<feature type="strand" evidence="2">
    <location>
        <begin position="302"/>
        <end position="306"/>
    </location>
</feature>
<feature type="strand" evidence="2">
    <location>
        <begin position="309"/>
        <end position="311"/>
    </location>
</feature>
<feature type="strand" evidence="2">
    <location>
        <begin position="314"/>
        <end position="321"/>
    </location>
</feature>
<gene>
    <name evidence="1" type="primary">cmoB</name>
    <name type="ordered locus">VV1_2153</name>
</gene>
<keyword id="KW-0002">3D-structure</keyword>
<keyword id="KW-0808">Transferase</keyword>
<keyword id="KW-0819">tRNA processing</keyword>
<comment type="function">
    <text evidence="1">Catalyzes carboxymethyl transfer from carboxy-S-adenosyl-L-methionine (Cx-SAM) to 5-hydroxyuridine (ho5U) to form 5-carboxymethoxyuridine (cmo5U) at position 34 in tRNAs.</text>
</comment>
<comment type="catalytic activity">
    <reaction evidence="1">
        <text>carboxy-S-adenosyl-L-methionine + 5-hydroxyuridine(34) in tRNA = 5-carboxymethoxyuridine(34) in tRNA + S-adenosyl-L-homocysteine + H(+)</text>
        <dbReference type="Rhea" id="RHEA:52848"/>
        <dbReference type="Rhea" id="RHEA-COMP:13381"/>
        <dbReference type="Rhea" id="RHEA-COMP:13383"/>
        <dbReference type="ChEBI" id="CHEBI:15378"/>
        <dbReference type="ChEBI" id="CHEBI:57856"/>
        <dbReference type="ChEBI" id="CHEBI:134278"/>
        <dbReference type="ChEBI" id="CHEBI:136877"/>
        <dbReference type="ChEBI" id="CHEBI:136879"/>
    </reaction>
</comment>
<comment type="subunit">
    <text evidence="1">Homotetramer.</text>
</comment>
<comment type="similarity">
    <text evidence="1">Belongs to the class I-like SAM-binding methyltransferase superfamily. CmoB family.</text>
</comment>
<name>CMOB_VIBVU</name>
<protein>
    <recommendedName>
        <fullName evidence="1">tRNA U34 carboxymethyltransferase</fullName>
        <ecNumber evidence="1">2.5.1.-</ecNumber>
    </recommendedName>
</protein>
<evidence type="ECO:0000255" key="1">
    <source>
        <dbReference type="HAMAP-Rule" id="MF_01590"/>
    </source>
</evidence>
<evidence type="ECO:0007829" key="2">
    <source>
        <dbReference type="PDB" id="7CT8"/>
    </source>
</evidence>
<evidence type="ECO:0007829" key="3">
    <source>
        <dbReference type="PDB" id="7CT9"/>
    </source>
</evidence>
<proteinExistence type="evidence at protein level"/>
<sequence>MFNFANFYQLIAQDTRLQPWLNVLPQQLTDWQNAEHGDFPRWLKALNKIPEGAPDQIDIKHSVTISNDTPFHQGELKKLESLLRTFHPWRKGPYTVHGIHIDTEWRSDWKWDRVLPHISPLKNRSVLDVGCGNGYHMWRMLGEGARLCVGIDPSHLFLIQFEAIRKLMGGDQRAHLLPLGIEQLPKLEAFDTVFSMGVLYHRRSPLDHLIQLKDQLVSGGELILETLVIEGDETAVLVPKERYAQMRNVYFFPSARALKVWLELVGFEDVRIVDENVTSVDEQRTTNWMTHNSLPDYLDQNDPSKTVEGYPAPRRAILVAKKP</sequence>
<reference key="1">
    <citation type="submission" date="2002-12" db="EMBL/GenBank/DDBJ databases">
        <title>Complete genome sequence of Vibrio vulnificus CMCP6.</title>
        <authorList>
            <person name="Rhee J.H."/>
            <person name="Kim S.Y."/>
            <person name="Chung S.S."/>
            <person name="Kim J.J."/>
            <person name="Moon Y.H."/>
            <person name="Jeong H."/>
            <person name="Choy H.E."/>
        </authorList>
    </citation>
    <scope>NUCLEOTIDE SEQUENCE [LARGE SCALE GENOMIC DNA]</scope>
    <source>
        <strain>CMCP6</strain>
    </source>
</reference>